<accession>A5FAX4</accession>
<comment type="function">
    <text evidence="1">Transfers a GMP moiety from GTP to Mo-molybdopterin (Mo-MPT) cofactor (Moco or molybdenum cofactor) to form Mo-molybdopterin guanine dinucleotide (Mo-MGD) cofactor.</text>
</comment>
<comment type="catalytic activity">
    <reaction evidence="1">
        <text>Mo-molybdopterin + GTP + H(+) = Mo-molybdopterin guanine dinucleotide + diphosphate</text>
        <dbReference type="Rhea" id="RHEA:34243"/>
        <dbReference type="ChEBI" id="CHEBI:15378"/>
        <dbReference type="ChEBI" id="CHEBI:33019"/>
        <dbReference type="ChEBI" id="CHEBI:37565"/>
        <dbReference type="ChEBI" id="CHEBI:71302"/>
        <dbReference type="ChEBI" id="CHEBI:71310"/>
        <dbReference type="EC" id="2.7.7.77"/>
    </reaction>
</comment>
<comment type="cofactor">
    <cofactor evidence="1">
        <name>Mg(2+)</name>
        <dbReference type="ChEBI" id="CHEBI:18420"/>
    </cofactor>
</comment>
<comment type="subcellular location">
    <subcellularLocation>
        <location evidence="1">Cytoplasm</location>
    </subcellularLocation>
</comment>
<comment type="domain">
    <text evidence="1">The N-terminal domain determines nucleotide recognition and specific binding, while the C-terminal domain determines the specific binding to the target protein.</text>
</comment>
<comment type="similarity">
    <text evidence="1">Belongs to the MobA family.</text>
</comment>
<proteinExistence type="inferred from homology"/>
<organism>
    <name type="scientific">Flavobacterium johnsoniae (strain ATCC 17061 / DSM 2064 / JCM 8514 / BCRC 14874 / CCUG 350202 / NBRC 14942 / NCIMB 11054 / UW101)</name>
    <name type="common">Cytophaga johnsonae</name>
    <dbReference type="NCBI Taxonomy" id="376686"/>
    <lineage>
        <taxon>Bacteria</taxon>
        <taxon>Pseudomonadati</taxon>
        <taxon>Bacteroidota</taxon>
        <taxon>Flavobacteriia</taxon>
        <taxon>Flavobacteriales</taxon>
        <taxon>Flavobacteriaceae</taxon>
        <taxon>Flavobacterium</taxon>
    </lineage>
</organism>
<evidence type="ECO:0000255" key="1">
    <source>
        <dbReference type="HAMAP-Rule" id="MF_00316"/>
    </source>
</evidence>
<name>MOBA_FLAJ1</name>
<dbReference type="EC" id="2.7.7.77" evidence="1"/>
<dbReference type="EMBL" id="CP000685">
    <property type="protein sequence ID" value="ABQ07641.1"/>
    <property type="molecule type" value="Genomic_DNA"/>
</dbReference>
<dbReference type="RefSeq" id="WP_012026607.1">
    <property type="nucleotide sequence ID" value="NZ_MUGZ01000004.1"/>
</dbReference>
<dbReference type="SMR" id="A5FAX4"/>
<dbReference type="STRING" id="376686.Fjoh_4642"/>
<dbReference type="KEGG" id="fjo:Fjoh_4642"/>
<dbReference type="eggNOG" id="COG0746">
    <property type="taxonomic scope" value="Bacteria"/>
</dbReference>
<dbReference type="HOGENOM" id="CLU_055597_2_2_10"/>
<dbReference type="OrthoDB" id="9788394at2"/>
<dbReference type="Proteomes" id="UP000006694">
    <property type="component" value="Chromosome"/>
</dbReference>
<dbReference type="GO" id="GO:0005737">
    <property type="term" value="C:cytoplasm"/>
    <property type="evidence" value="ECO:0007669"/>
    <property type="project" value="UniProtKB-SubCell"/>
</dbReference>
<dbReference type="GO" id="GO:0005525">
    <property type="term" value="F:GTP binding"/>
    <property type="evidence" value="ECO:0007669"/>
    <property type="project" value="UniProtKB-UniRule"/>
</dbReference>
<dbReference type="GO" id="GO:0046872">
    <property type="term" value="F:metal ion binding"/>
    <property type="evidence" value="ECO:0007669"/>
    <property type="project" value="UniProtKB-KW"/>
</dbReference>
<dbReference type="GO" id="GO:0061603">
    <property type="term" value="F:molybdenum cofactor guanylyltransferase activity"/>
    <property type="evidence" value="ECO:0007669"/>
    <property type="project" value="UniProtKB-EC"/>
</dbReference>
<dbReference type="GO" id="GO:0006777">
    <property type="term" value="P:Mo-molybdopterin cofactor biosynthetic process"/>
    <property type="evidence" value="ECO:0007669"/>
    <property type="project" value="UniProtKB-KW"/>
</dbReference>
<dbReference type="CDD" id="cd02503">
    <property type="entry name" value="MobA"/>
    <property type="match status" value="1"/>
</dbReference>
<dbReference type="Gene3D" id="3.90.550.10">
    <property type="entry name" value="Spore Coat Polysaccharide Biosynthesis Protein SpsA, Chain A"/>
    <property type="match status" value="1"/>
</dbReference>
<dbReference type="HAMAP" id="MF_00316">
    <property type="entry name" value="MobA"/>
    <property type="match status" value="1"/>
</dbReference>
<dbReference type="InterPro" id="IPR025877">
    <property type="entry name" value="MobA-like_NTP_Trfase"/>
</dbReference>
<dbReference type="InterPro" id="IPR013482">
    <property type="entry name" value="Molybde_CF_guanTrfase"/>
</dbReference>
<dbReference type="InterPro" id="IPR029044">
    <property type="entry name" value="Nucleotide-diphossugar_trans"/>
</dbReference>
<dbReference type="PANTHER" id="PTHR19136">
    <property type="entry name" value="MOLYBDENUM COFACTOR GUANYLYLTRANSFERASE"/>
    <property type="match status" value="1"/>
</dbReference>
<dbReference type="PANTHER" id="PTHR19136:SF81">
    <property type="entry name" value="MOLYBDENUM COFACTOR GUANYLYLTRANSFERASE"/>
    <property type="match status" value="1"/>
</dbReference>
<dbReference type="Pfam" id="PF12804">
    <property type="entry name" value="NTP_transf_3"/>
    <property type="match status" value="1"/>
</dbReference>
<dbReference type="SUPFAM" id="SSF53448">
    <property type="entry name" value="Nucleotide-diphospho-sugar transferases"/>
    <property type="match status" value="1"/>
</dbReference>
<gene>
    <name evidence="1" type="primary">mobA</name>
    <name type="ordered locus">Fjoh_4642</name>
</gene>
<feature type="chain" id="PRO_1000079108" description="Probable molybdenum cofactor guanylyltransferase">
    <location>
        <begin position="1"/>
        <end position="190"/>
    </location>
</feature>
<feature type="binding site" evidence="1">
    <location>
        <begin position="9"/>
        <end position="11"/>
    </location>
    <ligand>
        <name>GTP</name>
        <dbReference type="ChEBI" id="CHEBI:37565"/>
    </ligand>
</feature>
<feature type="binding site" evidence="1">
    <location>
        <position position="21"/>
    </location>
    <ligand>
        <name>GTP</name>
        <dbReference type="ChEBI" id="CHEBI:37565"/>
    </ligand>
</feature>
<feature type="binding site" evidence="1">
    <location>
        <position position="65"/>
    </location>
    <ligand>
        <name>GTP</name>
        <dbReference type="ChEBI" id="CHEBI:37565"/>
    </ligand>
</feature>
<feature type="binding site" evidence="1">
    <location>
        <position position="94"/>
    </location>
    <ligand>
        <name>GTP</name>
        <dbReference type="ChEBI" id="CHEBI:37565"/>
    </ligand>
</feature>
<feature type="binding site" evidence="1">
    <location>
        <position position="94"/>
    </location>
    <ligand>
        <name>Mg(2+)</name>
        <dbReference type="ChEBI" id="CHEBI:18420"/>
    </ligand>
</feature>
<keyword id="KW-0963">Cytoplasm</keyword>
<keyword id="KW-0342">GTP-binding</keyword>
<keyword id="KW-0460">Magnesium</keyword>
<keyword id="KW-0479">Metal-binding</keyword>
<keyword id="KW-0501">Molybdenum cofactor biosynthesis</keyword>
<keyword id="KW-0547">Nucleotide-binding</keyword>
<keyword id="KW-0808">Transferase</keyword>
<reference key="1">
    <citation type="journal article" date="2009" name="Appl. Environ. Microbiol.">
        <title>Novel features of the polysaccharide-digesting gliding bacterium Flavobacterium johnsoniae as revealed by genome sequence analysis.</title>
        <authorList>
            <person name="McBride M.J."/>
            <person name="Xie G."/>
            <person name="Martens E.C."/>
            <person name="Lapidus A."/>
            <person name="Henrissat B."/>
            <person name="Rhodes R.G."/>
            <person name="Goltsman E."/>
            <person name="Wang W."/>
            <person name="Xu J."/>
            <person name="Hunnicutt D.W."/>
            <person name="Staroscik A.M."/>
            <person name="Hoover T.R."/>
            <person name="Cheng Y.Q."/>
            <person name="Stein J.L."/>
        </authorList>
    </citation>
    <scope>NUCLEOTIDE SEQUENCE [LARGE SCALE GENOMIC DNA]</scope>
    <source>
        <strain>ATCC 17061 / DSM 2064 / JCM 8514 / BCRC 14874 / CCUG 350202 / NBRC 14942 / NCIMB 11054 / UW101</strain>
    </source>
</reference>
<sequence>METLTTFILCGGKSSRMQSEKGLVLFQHKPFIEHIIQAILPITEQIKLITASKEYDYLPYEKIPDLVLDKGPLGGIYTALSHSETEFNLILSCDIPLISTELLQELISKHTEEAGITVFASESKTHPLIGIYSKKILPIIKSAIEADELKMMDLLAKVPHQILNIEESENFHLTNINSADELNDLNINLS</sequence>
<protein>
    <recommendedName>
        <fullName evidence="1">Probable molybdenum cofactor guanylyltransferase</fullName>
        <shortName evidence="1">MoCo guanylyltransferase</shortName>
        <ecNumber evidence="1">2.7.7.77</ecNumber>
    </recommendedName>
    <alternativeName>
        <fullName evidence="1">GTP:molybdopterin guanylyltransferase</fullName>
    </alternativeName>
    <alternativeName>
        <fullName evidence="1">Mo-MPT guanylyltransferase</fullName>
    </alternativeName>
    <alternativeName>
        <fullName evidence="1">Molybdopterin guanylyltransferase</fullName>
    </alternativeName>
    <alternativeName>
        <fullName evidence="1">Molybdopterin-guanine dinucleotide synthase</fullName>
        <shortName evidence="1">MGD synthase</shortName>
    </alternativeName>
</protein>